<reference key="1">
    <citation type="journal article" date="1994" name="Nucleic Acids Res.">
        <title>Analysis of the Escherichia coli genome. V. DNA sequence of the region from 76.0 to 81.5 minutes.</title>
        <authorList>
            <person name="Sofia H.J."/>
            <person name="Burland V."/>
            <person name="Daniels D.L."/>
            <person name="Plunkett G. III"/>
            <person name="Blattner F.R."/>
        </authorList>
    </citation>
    <scope>NUCLEOTIDE SEQUENCE [LARGE SCALE GENOMIC DNA]</scope>
    <source>
        <strain>K12 / MG1655 / ATCC 47076</strain>
    </source>
</reference>
<reference key="2">
    <citation type="journal article" date="1997" name="Science">
        <title>The complete genome sequence of Escherichia coli K-12.</title>
        <authorList>
            <person name="Blattner F.R."/>
            <person name="Plunkett G. III"/>
            <person name="Bloch C.A."/>
            <person name="Perna N.T."/>
            <person name="Burland V."/>
            <person name="Riley M."/>
            <person name="Collado-Vides J."/>
            <person name="Glasner J.D."/>
            <person name="Rode C.K."/>
            <person name="Mayhew G.F."/>
            <person name="Gregor J."/>
            <person name="Davis N.W."/>
            <person name="Kirkpatrick H.A."/>
            <person name="Goeden M.A."/>
            <person name="Rose D.J."/>
            <person name="Mau B."/>
            <person name="Shao Y."/>
        </authorList>
    </citation>
    <scope>NUCLEOTIDE SEQUENCE [LARGE SCALE GENOMIC DNA]</scope>
    <source>
        <strain>K12 / MG1655 / ATCC 47076</strain>
    </source>
</reference>
<reference key="3">
    <citation type="journal article" date="2006" name="Mol. Syst. Biol.">
        <title>Highly accurate genome sequences of Escherichia coli K-12 strains MG1655 and W3110.</title>
        <authorList>
            <person name="Hayashi K."/>
            <person name="Morooka N."/>
            <person name="Yamamoto Y."/>
            <person name="Fujita K."/>
            <person name="Isono K."/>
            <person name="Choi S."/>
            <person name="Ohtsubo E."/>
            <person name="Baba T."/>
            <person name="Wanner B.L."/>
            <person name="Mori H."/>
            <person name="Horiuchi T."/>
        </authorList>
    </citation>
    <scope>NUCLEOTIDE SEQUENCE [LARGE SCALE GENOMIC DNA]</scope>
    <source>
        <strain>K12 / W3110 / ATCC 27325 / DSM 5911</strain>
    </source>
</reference>
<reference key="4">
    <citation type="journal article" date="2000" name="J. Bacteriol.">
        <title>Regulation of expression of the yiaKLMNOPQRS operon for carbohydrate utilization in Escherichia coli: involvement of the main transcriptional factors.</title>
        <authorList>
            <person name="Ibanez E."/>
            <person name="Campos E."/>
            <person name="Baldoma L."/>
            <person name="Aguilar J."/>
            <person name="Badia J."/>
        </authorList>
    </citation>
    <scope>FUNCTION</scope>
    <scope>INDUCTION</scope>
    <source>
        <strain>K12</strain>
    </source>
</reference>
<reference key="5">
    <citation type="submission" date="2005-03" db="PDB data bank">
        <title>The crystal structure of transcriptional regulator YiaJ.</title>
        <authorList>
            <consortium name="Midwest center for structural genomics (MCSG)"/>
        </authorList>
    </citation>
    <scope>X-RAY CRYSTALLOGRAPHY (1.75 ANGSTROMS) OF 94-282</scope>
</reference>
<feature type="chain" id="PRO_0000201771" description="DNA-binding transcriptional repressor YiaJ">
    <location>
        <begin position="1"/>
        <end position="282"/>
    </location>
</feature>
<feature type="domain" description="HTH iclR-type" evidence="1">
    <location>
        <begin position="23"/>
        <end position="85"/>
    </location>
</feature>
<feature type="domain" description="IclR-ED" evidence="2">
    <location>
        <begin position="100"/>
        <end position="272"/>
    </location>
</feature>
<feature type="DNA-binding region" description="H-T-H motif" evidence="1">
    <location>
        <begin position="45"/>
        <end position="64"/>
    </location>
</feature>
<feature type="region of interest" description="Disordered" evidence="3">
    <location>
        <begin position="1"/>
        <end position="21"/>
    </location>
</feature>
<feature type="compositionally biased region" description="Basic and acidic residues" evidence="3">
    <location>
        <begin position="1"/>
        <end position="20"/>
    </location>
</feature>
<feature type="helix" evidence="5">
    <location>
        <begin position="98"/>
        <end position="115"/>
    </location>
</feature>
<feature type="strand" evidence="5">
    <location>
        <begin position="117"/>
        <end position="125"/>
    </location>
</feature>
<feature type="strand" evidence="5">
    <location>
        <begin position="128"/>
        <end position="135"/>
    </location>
</feature>
<feature type="strand" evidence="5">
    <location>
        <begin position="151"/>
        <end position="153"/>
    </location>
</feature>
<feature type="helix" evidence="5">
    <location>
        <begin position="154"/>
        <end position="156"/>
    </location>
</feature>
<feature type="helix" evidence="5">
    <location>
        <begin position="158"/>
        <end position="165"/>
    </location>
</feature>
<feature type="helix" evidence="5">
    <location>
        <begin position="169"/>
        <end position="178"/>
    </location>
</feature>
<feature type="turn" evidence="5">
    <location>
        <begin position="179"/>
        <end position="182"/>
    </location>
</feature>
<feature type="helix" evidence="5">
    <location>
        <begin position="194"/>
        <end position="207"/>
    </location>
</feature>
<feature type="strand" evidence="5">
    <location>
        <begin position="210"/>
        <end position="217"/>
    </location>
</feature>
<feature type="strand" evidence="5">
    <location>
        <begin position="220"/>
        <end position="227"/>
    </location>
</feature>
<feature type="strand" evidence="5">
    <location>
        <begin position="235"/>
        <end position="243"/>
    </location>
</feature>
<feature type="helix" evidence="5">
    <location>
        <begin position="244"/>
        <end position="250"/>
    </location>
</feature>
<feature type="helix" evidence="5">
    <location>
        <begin position="252"/>
        <end position="272"/>
    </location>
</feature>
<gene>
    <name type="primary">yiaJ</name>
    <name type="ordered locus">b3574</name>
    <name type="ordered locus">JW3546</name>
</gene>
<name>YIAJ_ECOLI</name>
<comment type="function">
    <text evidence="4">Negatively controls the transcription of the yiaKLMNOPQRS operon, which may be involved in the utilization of 2,3-diketo-L-gulonate.</text>
</comment>
<comment type="induction">
    <text evidence="4">Expression of yiaJ is autogenously regulated and reduced by the binding of CRP-cAMP to the CRP site 1 of the YiaK-S promoter.</text>
</comment>
<organism>
    <name type="scientific">Escherichia coli (strain K12)</name>
    <dbReference type="NCBI Taxonomy" id="83333"/>
    <lineage>
        <taxon>Bacteria</taxon>
        <taxon>Pseudomonadati</taxon>
        <taxon>Pseudomonadota</taxon>
        <taxon>Gammaproteobacteria</taxon>
        <taxon>Enterobacterales</taxon>
        <taxon>Enterobacteriaceae</taxon>
        <taxon>Escherichia</taxon>
    </lineage>
</organism>
<dbReference type="EMBL" id="U00039">
    <property type="protein sequence ID" value="AAB18551.1"/>
    <property type="molecule type" value="Genomic_DNA"/>
</dbReference>
<dbReference type="EMBL" id="U00096">
    <property type="protein sequence ID" value="AAC76598.1"/>
    <property type="molecule type" value="Genomic_DNA"/>
</dbReference>
<dbReference type="EMBL" id="AP009048">
    <property type="protein sequence ID" value="BAE77719.1"/>
    <property type="molecule type" value="Genomic_DNA"/>
</dbReference>
<dbReference type="PIR" id="S47795">
    <property type="entry name" value="S47795"/>
</dbReference>
<dbReference type="RefSeq" id="NP_418031.1">
    <property type="nucleotide sequence ID" value="NC_000913.3"/>
</dbReference>
<dbReference type="RefSeq" id="WP_000514240.1">
    <property type="nucleotide sequence ID" value="NZ_SSZK01000041.1"/>
</dbReference>
<dbReference type="PDB" id="1YSQ">
    <property type="method" value="X-ray"/>
    <property type="resolution" value="1.75 A"/>
    <property type="chains" value="A=94-282"/>
</dbReference>
<dbReference type="PDBsum" id="1YSQ"/>
<dbReference type="SMR" id="P37671"/>
<dbReference type="BioGRID" id="4259370">
    <property type="interactions" value="109"/>
</dbReference>
<dbReference type="BioGRID" id="852392">
    <property type="interactions" value="2"/>
</dbReference>
<dbReference type="FunCoup" id="P37671">
    <property type="interactions" value="15"/>
</dbReference>
<dbReference type="IntAct" id="P37671">
    <property type="interactions" value="3"/>
</dbReference>
<dbReference type="STRING" id="511145.b3574"/>
<dbReference type="jPOST" id="P37671"/>
<dbReference type="PaxDb" id="511145-b3574"/>
<dbReference type="EnsemblBacteria" id="AAC76598">
    <property type="protein sequence ID" value="AAC76598"/>
    <property type="gene ID" value="b3574"/>
</dbReference>
<dbReference type="GeneID" id="948084"/>
<dbReference type="KEGG" id="ecj:JW3546"/>
<dbReference type="KEGG" id="eco:b3574"/>
<dbReference type="KEGG" id="ecoc:C3026_19380"/>
<dbReference type="PATRIC" id="fig|1411691.4.peg.3138"/>
<dbReference type="EchoBASE" id="EB2186"/>
<dbReference type="eggNOG" id="COG1414">
    <property type="taxonomic scope" value="Bacteria"/>
</dbReference>
<dbReference type="HOGENOM" id="CLU_062618_5_5_6"/>
<dbReference type="InParanoid" id="P37671"/>
<dbReference type="OMA" id="RYPVRMY"/>
<dbReference type="OrthoDB" id="9807558at2"/>
<dbReference type="PhylomeDB" id="P37671"/>
<dbReference type="BioCyc" id="EcoCyc:EG12278-MONOMER"/>
<dbReference type="EvolutionaryTrace" id="P37671"/>
<dbReference type="PRO" id="PR:P37671"/>
<dbReference type="Proteomes" id="UP000000625">
    <property type="component" value="Chromosome"/>
</dbReference>
<dbReference type="GO" id="GO:0003677">
    <property type="term" value="F:DNA binding"/>
    <property type="evidence" value="ECO:0000314"/>
    <property type="project" value="EcoCyc"/>
</dbReference>
<dbReference type="GO" id="GO:0003700">
    <property type="term" value="F:DNA-binding transcription factor activity"/>
    <property type="evidence" value="ECO:0000318"/>
    <property type="project" value="GO_Central"/>
</dbReference>
<dbReference type="GO" id="GO:0045892">
    <property type="term" value="P:negative regulation of DNA-templated transcription"/>
    <property type="evidence" value="ECO:0000314"/>
    <property type="project" value="EcoCyc"/>
</dbReference>
<dbReference type="FunFam" id="1.10.10.10:FF:000221">
    <property type="entry name" value="IclR family transcriptional regulator"/>
    <property type="match status" value="1"/>
</dbReference>
<dbReference type="FunFam" id="3.30.450.40:FF:000022">
    <property type="entry name" value="IclR family transcriptional regulator"/>
    <property type="match status" value="1"/>
</dbReference>
<dbReference type="Gene3D" id="3.30.450.40">
    <property type="match status" value="1"/>
</dbReference>
<dbReference type="Gene3D" id="1.10.10.10">
    <property type="entry name" value="Winged helix-like DNA-binding domain superfamily/Winged helix DNA-binding domain"/>
    <property type="match status" value="1"/>
</dbReference>
<dbReference type="InterPro" id="IPR029016">
    <property type="entry name" value="GAF-like_dom_sf"/>
</dbReference>
<dbReference type="InterPro" id="IPR050707">
    <property type="entry name" value="HTH_MetabolicPath_Reg"/>
</dbReference>
<dbReference type="InterPro" id="IPR014757">
    <property type="entry name" value="Tscrpt_reg_IclR_C"/>
</dbReference>
<dbReference type="InterPro" id="IPR005471">
    <property type="entry name" value="Tscrpt_reg_IclR_N"/>
</dbReference>
<dbReference type="InterPro" id="IPR036388">
    <property type="entry name" value="WH-like_DNA-bd_sf"/>
</dbReference>
<dbReference type="InterPro" id="IPR036390">
    <property type="entry name" value="WH_DNA-bd_sf"/>
</dbReference>
<dbReference type="PANTHER" id="PTHR30136:SF19">
    <property type="entry name" value="DNA-BINDING TRANSCRIPTIONAL REPRESSOR YIAJ"/>
    <property type="match status" value="1"/>
</dbReference>
<dbReference type="PANTHER" id="PTHR30136">
    <property type="entry name" value="HELIX-TURN-HELIX TRANSCRIPTIONAL REGULATOR, ICLR FAMILY"/>
    <property type="match status" value="1"/>
</dbReference>
<dbReference type="Pfam" id="PF09339">
    <property type="entry name" value="HTH_IclR"/>
    <property type="match status" value="1"/>
</dbReference>
<dbReference type="Pfam" id="PF01614">
    <property type="entry name" value="IclR_C"/>
    <property type="match status" value="1"/>
</dbReference>
<dbReference type="SMART" id="SM00346">
    <property type="entry name" value="HTH_ICLR"/>
    <property type="match status" value="1"/>
</dbReference>
<dbReference type="SUPFAM" id="SSF55781">
    <property type="entry name" value="GAF domain-like"/>
    <property type="match status" value="1"/>
</dbReference>
<dbReference type="SUPFAM" id="SSF46785">
    <property type="entry name" value="Winged helix' DNA-binding domain"/>
    <property type="match status" value="1"/>
</dbReference>
<dbReference type="PROSITE" id="PS51077">
    <property type="entry name" value="HTH_ICLR"/>
    <property type="match status" value="1"/>
</dbReference>
<dbReference type="PROSITE" id="PS51078">
    <property type="entry name" value="ICLR_ED"/>
    <property type="match status" value="1"/>
</dbReference>
<accession>P37671</accession>
<accession>Q2M7N7</accession>
<protein>
    <recommendedName>
        <fullName>DNA-binding transcriptional repressor YiaJ</fullName>
    </recommendedName>
    <alternativeName>
        <fullName>YiaKLMNOPQRS operon repressor</fullName>
        <shortName>YiaK-S operon repressor</shortName>
    </alternativeName>
</protein>
<evidence type="ECO:0000255" key="1">
    <source>
        <dbReference type="PROSITE-ProRule" id="PRU00393"/>
    </source>
</evidence>
<evidence type="ECO:0000255" key="2">
    <source>
        <dbReference type="PROSITE-ProRule" id="PRU00394"/>
    </source>
</evidence>
<evidence type="ECO:0000256" key="3">
    <source>
        <dbReference type="SAM" id="MobiDB-lite"/>
    </source>
</evidence>
<evidence type="ECO:0000269" key="4">
    <source>
    </source>
</evidence>
<evidence type="ECO:0007829" key="5">
    <source>
        <dbReference type="PDB" id="1YSQ"/>
    </source>
</evidence>
<sequence length="282" mass="31067">MGKEVMGKKENEMAQEKERPAGSQSLFRGLMLIEILSNYPNGCPLAHLSELAGLNKSTVHRLLQGLQSCGYVTTAPAAGSYRLTTKFIAVGQKALSSLNIIHIAAPHLEALNIATGETINFSSREDDHAILIYKLEPTTGMLRTRAYIGQHMPLYCSAMGKIYMAFGHPDYVKSYWESHQHEIQPLTRNTITELPAMFDELAHIRESGAAMDREENELGVSCIAVPVFDIHGRVPYAVSISLSTSRLKQVGEKNLLKPLRETAQAISNELGFTVRDDLGAIT</sequence>
<keyword id="KW-0002">3D-structure</keyword>
<keyword id="KW-0238">DNA-binding</keyword>
<keyword id="KW-1185">Reference proteome</keyword>
<keyword id="KW-0678">Repressor</keyword>
<keyword id="KW-0804">Transcription</keyword>
<keyword id="KW-0805">Transcription regulation</keyword>
<proteinExistence type="evidence at protein level"/>